<dbReference type="EC" id="3.4.21.88" evidence="1"/>
<dbReference type="EMBL" id="X70965">
    <property type="protein sequence ID" value="CAA50300.1"/>
    <property type="molecule type" value="Genomic_DNA"/>
</dbReference>
<dbReference type="PIR" id="S33693">
    <property type="entry name" value="S33693"/>
</dbReference>
<dbReference type="RefSeq" id="WP_004915217.1">
    <property type="nucleotide sequence ID" value="NZ_VEVM01000018.1"/>
</dbReference>
<dbReference type="SMR" id="Q07267"/>
<dbReference type="STRING" id="587.RB151_004480"/>
<dbReference type="MEROPS" id="S24.001"/>
<dbReference type="GeneID" id="93671567"/>
<dbReference type="OMA" id="HVWLLPH"/>
<dbReference type="OrthoDB" id="9802364at2"/>
<dbReference type="GO" id="GO:0003677">
    <property type="term" value="F:DNA binding"/>
    <property type="evidence" value="ECO:0007669"/>
    <property type="project" value="UniProtKB-UniRule"/>
</dbReference>
<dbReference type="GO" id="GO:0004252">
    <property type="term" value="F:serine-type endopeptidase activity"/>
    <property type="evidence" value="ECO:0007669"/>
    <property type="project" value="UniProtKB-UniRule"/>
</dbReference>
<dbReference type="GO" id="GO:0006281">
    <property type="term" value="P:DNA repair"/>
    <property type="evidence" value="ECO:0007669"/>
    <property type="project" value="UniProtKB-UniRule"/>
</dbReference>
<dbReference type="GO" id="GO:0006260">
    <property type="term" value="P:DNA replication"/>
    <property type="evidence" value="ECO:0007669"/>
    <property type="project" value="UniProtKB-UniRule"/>
</dbReference>
<dbReference type="GO" id="GO:0045892">
    <property type="term" value="P:negative regulation of DNA-templated transcription"/>
    <property type="evidence" value="ECO:0007669"/>
    <property type="project" value="UniProtKB-UniRule"/>
</dbReference>
<dbReference type="GO" id="GO:0006508">
    <property type="term" value="P:proteolysis"/>
    <property type="evidence" value="ECO:0007669"/>
    <property type="project" value="InterPro"/>
</dbReference>
<dbReference type="GO" id="GO:0009432">
    <property type="term" value="P:SOS response"/>
    <property type="evidence" value="ECO:0007669"/>
    <property type="project" value="UniProtKB-UniRule"/>
</dbReference>
<dbReference type="CDD" id="cd06529">
    <property type="entry name" value="S24_LexA-like"/>
    <property type="match status" value="1"/>
</dbReference>
<dbReference type="FunFam" id="1.10.10.10:FF:000009">
    <property type="entry name" value="LexA repressor"/>
    <property type="match status" value="1"/>
</dbReference>
<dbReference type="FunFam" id="2.10.109.10:FF:000001">
    <property type="entry name" value="LexA repressor"/>
    <property type="match status" value="1"/>
</dbReference>
<dbReference type="Gene3D" id="2.10.109.10">
    <property type="entry name" value="Umud Fragment, subunit A"/>
    <property type="match status" value="1"/>
</dbReference>
<dbReference type="Gene3D" id="1.10.10.10">
    <property type="entry name" value="Winged helix-like DNA-binding domain superfamily/Winged helix DNA-binding domain"/>
    <property type="match status" value="1"/>
</dbReference>
<dbReference type="HAMAP" id="MF_00015">
    <property type="entry name" value="LexA"/>
    <property type="match status" value="1"/>
</dbReference>
<dbReference type="InterPro" id="IPR006200">
    <property type="entry name" value="LexA"/>
</dbReference>
<dbReference type="InterPro" id="IPR039418">
    <property type="entry name" value="LexA-like"/>
</dbReference>
<dbReference type="InterPro" id="IPR036286">
    <property type="entry name" value="LexA/Signal_pep-like_sf"/>
</dbReference>
<dbReference type="InterPro" id="IPR006199">
    <property type="entry name" value="LexA_DNA-bd_dom"/>
</dbReference>
<dbReference type="InterPro" id="IPR050077">
    <property type="entry name" value="LexA_repressor"/>
</dbReference>
<dbReference type="InterPro" id="IPR006197">
    <property type="entry name" value="Peptidase_S24_LexA"/>
</dbReference>
<dbReference type="InterPro" id="IPR015927">
    <property type="entry name" value="Peptidase_S24_S26A/B/C"/>
</dbReference>
<dbReference type="InterPro" id="IPR036388">
    <property type="entry name" value="WH-like_DNA-bd_sf"/>
</dbReference>
<dbReference type="InterPro" id="IPR036390">
    <property type="entry name" value="WH_DNA-bd_sf"/>
</dbReference>
<dbReference type="NCBIfam" id="TIGR00498">
    <property type="entry name" value="lexA"/>
    <property type="match status" value="1"/>
</dbReference>
<dbReference type="PANTHER" id="PTHR33516">
    <property type="entry name" value="LEXA REPRESSOR"/>
    <property type="match status" value="1"/>
</dbReference>
<dbReference type="PANTHER" id="PTHR33516:SF2">
    <property type="entry name" value="LEXA REPRESSOR-RELATED"/>
    <property type="match status" value="1"/>
</dbReference>
<dbReference type="Pfam" id="PF01726">
    <property type="entry name" value="LexA_DNA_bind"/>
    <property type="match status" value="1"/>
</dbReference>
<dbReference type="Pfam" id="PF00717">
    <property type="entry name" value="Peptidase_S24"/>
    <property type="match status" value="1"/>
</dbReference>
<dbReference type="PRINTS" id="PR00726">
    <property type="entry name" value="LEXASERPTASE"/>
</dbReference>
<dbReference type="SUPFAM" id="SSF51306">
    <property type="entry name" value="LexA/Signal peptidase"/>
    <property type="match status" value="1"/>
</dbReference>
<dbReference type="SUPFAM" id="SSF46785">
    <property type="entry name" value="Winged helix' DNA-binding domain"/>
    <property type="match status" value="1"/>
</dbReference>
<accession>Q07267</accession>
<feature type="chain" id="PRO_0000170066" description="LexA repressor">
    <location>
        <begin position="1"/>
        <end position="205"/>
    </location>
</feature>
<feature type="DNA-binding region" description="H-T-H motif" evidence="1">
    <location>
        <begin position="28"/>
        <end position="48"/>
    </location>
</feature>
<feature type="active site" description="For autocatalytic cleavage activity" evidence="1">
    <location>
        <position position="122"/>
    </location>
</feature>
<feature type="active site" description="For autocatalytic cleavage activity" evidence="1">
    <location>
        <position position="159"/>
    </location>
</feature>
<feature type="site" description="Cleavage; by autolysis" evidence="1">
    <location>
        <begin position="87"/>
        <end position="88"/>
    </location>
</feature>
<proteinExistence type="inferred from homology"/>
<comment type="function">
    <text evidence="1">Represses a number of genes involved in the response to DNA damage (SOS response), including recA and lexA. Binds to the 16 bp palindromic sequence 5'-CTGTATATATATACAG-3'. In the presence of single-stranded DNA, RecA interacts with LexA causing an autocatalytic cleavage which disrupts the DNA-binding part of LexA, leading to derepression of the SOS regulon and eventually DNA repair.</text>
</comment>
<comment type="catalytic activity">
    <reaction evidence="1">
        <text>Hydrolysis of Ala-|-Gly bond in repressor LexA.</text>
        <dbReference type="EC" id="3.4.21.88"/>
    </reaction>
</comment>
<comment type="subunit">
    <text evidence="1">Homodimer.</text>
</comment>
<comment type="similarity">
    <text evidence="1">Belongs to the peptidase S24 family.</text>
</comment>
<protein>
    <recommendedName>
        <fullName evidence="1">LexA repressor</fullName>
        <ecNumber evidence="1">3.4.21.88</ecNumber>
    </recommendedName>
</protein>
<gene>
    <name evidence="1" type="primary">lexA</name>
</gene>
<organism>
    <name type="scientific">Providencia rettgeri</name>
    <dbReference type="NCBI Taxonomy" id="587"/>
    <lineage>
        <taxon>Bacteria</taxon>
        <taxon>Pseudomonadati</taxon>
        <taxon>Pseudomonadota</taxon>
        <taxon>Gammaproteobacteria</taxon>
        <taxon>Enterobacterales</taxon>
        <taxon>Morganellaceae</taxon>
        <taxon>Providencia</taxon>
    </lineage>
</organism>
<reference key="1">
    <citation type="journal article" date="1993" name="Nucleic Acids Res.">
        <title>Sequence of the Providencia rettgeri lexA gene and its control region.</title>
        <authorList>
            <person name="Riera J."/>
            <person name="Barbe J."/>
        </authorList>
    </citation>
    <scope>NUCLEOTIDE SEQUENCE [GENOMIC DNA]</scope>
    <source>
        <strain>ATCC 29944 / DSM 4542 / CIP 103182 / JCM 1675 / LMG 3259 / NCTC 11801 / 1163</strain>
    </source>
</reference>
<evidence type="ECO:0000255" key="1">
    <source>
        <dbReference type="HAMAP-Rule" id="MF_00015"/>
    </source>
</evidence>
<keyword id="KW-0068">Autocatalytic cleavage</keyword>
<keyword id="KW-0227">DNA damage</keyword>
<keyword id="KW-0234">DNA repair</keyword>
<keyword id="KW-0235">DNA replication</keyword>
<keyword id="KW-0238">DNA-binding</keyword>
<keyword id="KW-0378">Hydrolase</keyword>
<keyword id="KW-0678">Repressor</keyword>
<keyword id="KW-0742">SOS response</keyword>
<keyword id="KW-0804">Transcription</keyword>
<keyword id="KW-0805">Transcription regulation</keyword>
<name>LEXA_PRORE</name>
<sequence length="205" mass="22847">MKALTARQQQVYDLVRDHISQTGMPPTRAEIAASLGFRSPNAAEEHLKALARKGVIEIVSGASRGIRLLLEEETEDQGLPLIGRVAAGEPLLAQEHIESHYQVDPELFKPHADFLLRVNGMSMKDIGIMDGDLLAVHKTQNVHNGQVVVARIEDEVTVKRFKQQGNRVELIAENPEFEPIVVDLRQQNFTIEGLAVGVIRNSDWY</sequence>